<comment type="function">
    <text evidence="1">Appears to play a crucial role in the insertion of secretory and membrane polypeptides into the ER. It is required for assembly of membrane and secretory proteins and is essential for cell growth. It interacts with other membrane proteins required for protein translocation. Upon binding to SEC62/63 complex, secretory precursor polypeptides may engage SEC61 to begin membrane penetration event. A cycle of assembly and disassembly of SEC62/63 from SEC61 may govern the activity of the translocase (By similarity).</text>
</comment>
<comment type="subunit">
    <text evidence="1">Heterotrimeric complex composed of SEC61-alpha, SEC61-beta and SEC61-gamma.</text>
</comment>
<comment type="subcellular location">
    <subcellularLocation>
        <location>Endoplasmic reticulum membrane</location>
        <topology>Multi-pass membrane protein</topology>
    </subcellularLocation>
</comment>
<comment type="similarity">
    <text evidence="3">Belongs to the SecY/SEC61-alpha family.</text>
</comment>
<sequence>MSGFRVLDLVKPFTPFMPEVIAPERKVAFQQRLMWTGVTLLIFLVMSEIPLYGIASSDGSDPLYWLRMMLASNRGTLMELGISPIVSAGMVFQLLQGTKLITVDMSNKNDRDQFQTAQKLFAILLAVGQATVYVLTGMYGPPSSLGTGVCLLLVLQLVFAGIVVILLDELLQKGYGLGSGISLFTATNVCEQVFWKAFAPTTSNIGKGTEFEGAVVALFHLLGSRKDKKRALLEAFYRSHLPNMFQLIATVFVFLLVVYLQGFRIELPIKSTRQRGPYGLYPIRLFYTSNIPIMLQSALSSNIFIISQMLFVRWPNNIFVKILGSWDTRQGAAQLYAVSGLAYYIQPPLSFTEALLDPIKTIIYIIFVLGSCAVFSTTWIEISGASPRDVAKQFKEQGLVIAGHRDTSAYRELKKIIPTAAAFGGATIGALSVFCDLMGTLGSGTSILLSVTTIYGYYELAMKEGGFGKSVVSSFSDGI</sequence>
<name>SC61A_DEBHA</name>
<keyword id="KW-0256">Endoplasmic reticulum</keyword>
<keyword id="KW-0472">Membrane</keyword>
<keyword id="KW-0653">Protein transport</keyword>
<keyword id="KW-1185">Reference proteome</keyword>
<keyword id="KW-0811">Translocation</keyword>
<keyword id="KW-0812">Transmembrane</keyword>
<keyword id="KW-1133">Transmembrane helix</keyword>
<keyword id="KW-0813">Transport</keyword>
<accession>Q6BN08</accession>
<proteinExistence type="inferred from homology"/>
<evidence type="ECO:0000250" key="1"/>
<evidence type="ECO:0000255" key="2"/>
<evidence type="ECO:0000305" key="3"/>
<dbReference type="EMBL" id="CR382138">
    <property type="protein sequence ID" value="CAG88716.1"/>
    <property type="molecule type" value="Genomic_DNA"/>
</dbReference>
<dbReference type="RefSeq" id="XP_460412.1">
    <property type="nucleotide sequence ID" value="XM_460412.1"/>
</dbReference>
<dbReference type="SMR" id="Q6BN08"/>
<dbReference type="FunCoup" id="Q6BN08">
    <property type="interactions" value="997"/>
</dbReference>
<dbReference type="STRING" id="284592.Q6BN08"/>
<dbReference type="GeneID" id="2903812"/>
<dbReference type="KEGG" id="dha:DEHA2F01144g"/>
<dbReference type="VEuPathDB" id="FungiDB:DEHA2F01144g"/>
<dbReference type="eggNOG" id="KOG1373">
    <property type="taxonomic scope" value="Eukaryota"/>
</dbReference>
<dbReference type="HOGENOM" id="CLU_031763_2_1_1"/>
<dbReference type="InParanoid" id="Q6BN08"/>
<dbReference type="OMA" id="PMMRQMF"/>
<dbReference type="OrthoDB" id="420669at2759"/>
<dbReference type="Proteomes" id="UP000000599">
    <property type="component" value="Chromosome F"/>
</dbReference>
<dbReference type="GO" id="GO:0000324">
    <property type="term" value="C:fungal-type vacuole"/>
    <property type="evidence" value="ECO:0007669"/>
    <property type="project" value="EnsemblFungi"/>
</dbReference>
<dbReference type="GO" id="GO:0005784">
    <property type="term" value="C:Sec61 translocon complex"/>
    <property type="evidence" value="ECO:0007669"/>
    <property type="project" value="EnsemblFungi"/>
</dbReference>
<dbReference type="GO" id="GO:1904680">
    <property type="term" value="F:peptide transmembrane transporter activity"/>
    <property type="evidence" value="ECO:0007669"/>
    <property type="project" value="EnsemblFungi"/>
</dbReference>
<dbReference type="GO" id="GO:0015450">
    <property type="term" value="F:protein-transporting ATPase activity"/>
    <property type="evidence" value="ECO:0007669"/>
    <property type="project" value="EnsemblFungi"/>
</dbReference>
<dbReference type="GO" id="GO:0005048">
    <property type="term" value="F:signal sequence binding"/>
    <property type="evidence" value="ECO:0007669"/>
    <property type="project" value="EnsemblFungi"/>
</dbReference>
<dbReference type="GO" id="GO:0070843">
    <property type="term" value="P:misfolded protein transport"/>
    <property type="evidence" value="ECO:0007669"/>
    <property type="project" value="EnsemblFungi"/>
</dbReference>
<dbReference type="GO" id="GO:0031204">
    <property type="term" value="P:post-translational protein targeting to membrane, translocation"/>
    <property type="evidence" value="ECO:0007669"/>
    <property type="project" value="EnsemblFungi"/>
</dbReference>
<dbReference type="GO" id="GO:0030970">
    <property type="term" value="P:retrograde protein transport, ER to cytosol"/>
    <property type="evidence" value="ECO:0007669"/>
    <property type="project" value="EnsemblFungi"/>
</dbReference>
<dbReference type="GO" id="GO:0006616">
    <property type="term" value="P:SRP-dependent cotranslational protein targeting to membrane, translocation"/>
    <property type="evidence" value="ECO:0007669"/>
    <property type="project" value="EnsemblFungi"/>
</dbReference>
<dbReference type="FunFam" id="1.10.3370.10:FF:000002">
    <property type="entry name" value="Transport Sec61 subunit alpha isoform 2"/>
    <property type="match status" value="1"/>
</dbReference>
<dbReference type="Gene3D" id="1.10.3370.10">
    <property type="entry name" value="SecY subunit domain"/>
    <property type="match status" value="1"/>
</dbReference>
<dbReference type="InterPro" id="IPR002208">
    <property type="entry name" value="SecY/SEC61-alpha"/>
</dbReference>
<dbReference type="InterPro" id="IPR030659">
    <property type="entry name" value="SecY_CS"/>
</dbReference>
<dbReference type="InterPro" id="IPR023201">
    <property type="entry name" value="SecY_dom_sf"/>
</dbReference>
<dbReference type="InterPro" id="IPR019561">
    <property type="entry name" value="Translocon_Sec61/SecY_plug_dom"/>
</dbReference>
<dbReference type="NCBIfam" id="TIGR00967">
    <property type="entry name" value="3a0501s007"/>
    <property type="match status" value="1"/>
</dbReference>
<dbReference type="NCBIfam" id="NF006341">
    <property type="entry name" value="PRK08568.1-5"/>
    <property type="match status" value="1"/>
</dbReference>
<dbReference type="PANTHER" id="PTHR10906">
    <property type="entry name" value="SECY/SEC61-ALPHA FAMILY MEMBER"/>
    <property type="match status" value="1"/>
</dbReference>
<dbReference type="Pfam" id="PF10559">
    <property type="entry name" value="Plug_translocon"/>
    <property type="match status" value="1"/>
</dbReference>
<dbReference type="Pfam" id="PF00344">
    <property type="entry name" value="SecY"/>
    <property type="match status" value="1"/>
</dbReference>
<dbReference type="PIRSF" id="PIRSF004557">
    <property type="entry name" value="SecY"/>
    <property type="match status" value="1"/>
</dbReference>
<dbReference type="SUPFAM" id="SSF103491">
    <property type="entry name" value="Preprotein translocase SecY subunit"/>
    <property type="match status" value="1"/>
</dbReference>
<dbReference type="PROSITE" id="PS00755">
    <property type="entry name" value="SECY_1"/>
    <property type="match status" value="1"/>
</dbReference>
<dbReference type="PROSITE" id="PS00756">
    <property type="entry name" value="SECY_2"/>
    <property type="match status" value="1"/>
</dbReference>
<reference key="1">
    <citation type="journal article" date="2004" name="Nature">
        <title>Genome evolution in yeasts.</title>
        <authorList>
            <person name="Dujon B."/>
            <person name="Sherman D."/>
            <person name="Fischer G."/>
            <person name="Durrens P."/>
            <person name="Casaregola S."/>
            <person name="Lafontaine I."/>
            <person name="de Montigny J."/>
            <person name="Marck C."/>
            <person name="Neuveglise C."/>
            <person name="Talla E."/>
            <person name="Goffard N."/>
            <person name="Frangeul L."/>
            <person name="Aigle M."/>
            <person name="Anthouard V."/>
            <person name="Babour A."/>
            <person name="Barbe V."/>
            <person name="Barnay S."/>
            <person name="Blanchin S."/>
            <person name="Beckerich J.-M."/>
            <person name="Beyne E."/>
            <person name="Bleykasten C."/>
            <person name="Boisrame A."/>
            <person name="Boyer J."/>
            <person name="Cattolico L."/>
            <person name="Confanioleri F."/>
            <person name="de Daruvar A."/>
            <person name="Despons L."/>
            <person name="Fabre E."/>
            <person name="Fairhead C."/>
            <person name="Ferry-Dumazet H."/>
            <person name="Groppi A."/>
            <person name="Hantraye F."/>
            <person name="Hennequin C."/>
            <person name="Jauniaux N."/>
            <person name="Joyet P."/>
            <person name="Kachouri R."/>
            <person name="Kerrest A."/>
            <person name="Koszul R."/>
            <person name="Lemaire M."/>
            <person name="Lesur I."/>
            <person name="Ma L."/>
            <person name="Muller H."/>
            <person name="Nicaud J.-M."/>
            <person name="Nikolski M."/>
            <person name="Oztas S."/>
            <person name="Ozier-Kalogeropoulos O."/>
            <person name="Pellenz S."/>
            <person name="Potier S."/>
            <person name="Richard G.-F."/>
            <person name="Straub M.-L."/>
            <person name="Suleau A."/>
            <person name="Swennen D."/>
            <person name="Tekaia F."/>
            <person name="Wesolowski-Louvel M."/>
            <person name="Westhof E."/>
            <person name="Wirth B."/>
            <person name="Zeniou-Meyer M."/>
            <person name="Zivanovic Y."/>
            <person name="Bolotin-Fukuhara M."/>
            <person name="Thierry A."/>
            <person name="Bouchier C."/>
            <person name="Caudron B."/>
            <person name="Scarpelli C."/>
            <person name="Gaillardin C."/>
            <person name="Weissenbach J."/>
            <person name="Wincker P."/>
            <person name="Souciet J.-L."/>
        </authorList>
    </citation>
    <scope>NUCLEOTIDE SEQUENCE [LARGE SCALE GENOMIC DNA]</scope>
    <source>
        <strain>ATCC 36239 / CBS 767 / BCRC 21394 / JCM 1990 / NBRC 0083 / IGC 2968</strain>
    </source>
</reference>
<gene>
    <name type="primary">SEC61</name>
    <name type="ordered locus">DEHA2F01144g</name>
</gene>
<organism>
    <name type="scientific">Debaryomyces hansenii (strain ATCC 36239 / CBS 767 / BCRC 21394 / JCM 1990 / NBRC 0083 / IGC 2968)</name>
    <name type="common">Yeast</name>
    <name type="synonym">Torulaspora hansenii</name>
    <dbReference type="NCBI Taxonomy" id="284592"/>
    <lineage>
        <taxon>Eukaryota</taxon>
        <taxon>Fungi</taxon>
        <taxon>Dikarya</taxon>
        <taxon>Ascomycota</taxon>
        <taxon>Saccharomycotina</taxon>
        <taxon>Pichiomycetes</taxon>
        <taxon>Debaryomycetaceae</taxon>
        <taxon>Debaryomyces</taxon>
    </lineage>
</organism>
<feature type="chain" id="PRO_0000131783" description="Protein transport protein SEC61 subunit alpha">
    <location>
        <begin position="1"/>
        <end position="479"/>
    </location>
</feature>
<feature type="topological domain" description="Cytoplasmic" evidence="2">
    <location>
        <begin position="1"/>
        <end position="33"/>
    </location>
</feature>
<feature type="transmembrane region" description="Helical" evidence="2">
    <location>
        <begin position="34"/>
        <end position="54"/>
    </location>
</feature>
<feature type="topological domain" description="Lumenal" evidence="2">
    <location>
        <begin position="55"/>
        <end position="76"/>
    </location>
</feature>
<feature type="transmembrane region" description="Helical" evidence="2">
    <location>
        <begin position="77"/>
        <end position="97"/>
    </location>
</feature>
<feature type="topological domain" description="Cytoplasmic" evidence="2">
    <location>
        <begin position="98"/>
        <end position="119"/>
    </location>
</feature>
<feature type="transmembrane region" description="Helical" evidence="2">
    <location>
        <begin position="120"/>
        <end position="140"/>
    </location>
</feature>
<feature type="topological domain" description="Lumenal" evidence="2">
    <location>
        <begin position="141"/>
        <end position="146"/>
    </location>
</feature>
<feature type="transmembrane region" description="Helical" evidence="2">
    <location>
        <begin position="147"/>
        <end position="167"/>
    </location>
</feature>
<feature type="topological domain" description="Cytoplasmic" evidence="2">
    <location>
        <begin position="168"/>
        <end position="246"/>
    </location>
</feature>
<feature type="transmembrane region" description="Helical" evidence="2">
    <location>
        <begin position="247"/>
        <end position="267"/>
    </location>
</feature>
<feature type="topological domain" description="Lumenal" evidence="2">
    <location>
        <begin position="268"/>
        <end position="361"/>
    </location>
</feature>
<feature type="transmembrane region" description="Helical" evidence="2">
    <location>
        <begin position="362"/>
        <end position="382"/>
    </location>
</feature>
<feature type="topological domain" description="Cytoplasmic" evidence="2">
    <location>
        <begin position="383"/>
        <end position="415"/>
    </location>
</feature>
<feature type="transmembrane region" description="Helical" evidence="2">
    <location>
        <begin position="416"/>
        <end position="434"/>
    </location>
</feature>
<feature type="topological domain" description="Lumenal" evidence="2">
    <location>
        <begin position="435"/>
        <end position="440"/>
    </location>
</feature>
<feature type="transmembrane region" description="Helical" evidence="2">
    <location>
        <begin position="441"/>
        <end position="458"/>
    </location>
</feature>
<feature type="topological domain" description="Cytoplasmic" evidence="2">
    <location>
        <begin position="459"/>
        <end position="479"/>
    </location>
</feature>
<protein>
    <recommendedName>
        <fullName>Protein transport protein SEC61 subunit alpha</fullName>
    </recommendedName>
</protein>